<proteinExistence type="inferred from homology"/>
<keyword id="KW-1003">Cell membrane</keyword>
<keyword id="KW-0472">Membrane</keyword>
<keyword id="KW-0653">Protein transport</keyword>
<keyword id="KW-0811">Translocation</keyword>
<keyword id="KW-0812">Transmembrane</keyword>
<keyword id="KW-1133">Transmembrane helix</keyword>
<keyword id="KW-0813">Transport</keyword>
<accession>B6YW71</accession>
<protein>
    <recommendedName>
        <fullName evidence="1">Preprotein translocase subunit SecG</fullName>
    </recommendedName>
    <alternativeName>
        <fullName evidence="1">Protein transport protein Sec61 subunit beta homolog</fullName>
    </alternativeName>
</protein>
<sequence>MAKEKATLPPTGAGLMRFFDEDTKAVKISPRGVIALTLILVALEILLHAFGPQIFG</sequence>
<evidence type="ECO:0000255" key="1">
    <source>
        <dbReference type="HAMAP-Rule" id="MF_00751"/>
    </source>
</evidence>
<feature type="chain" id="PRO_1000196954" description="Preprotein translocase subunit SecG">
    <location>
        <begin position="1"/>
        <end position="56"/>
    </location>
</feature>
<feature type="topological domain" description="Cytoplasmic" evidence="1">
    <location>
        <begin position="1"/>
        <end position="29"/>
    </location>
</feature>
<feature type="transmembrane region" description="Helical" evidence="1">
    <location>
        <begin position="30"/>
        <end position="51"/>
    </location>
</feature>
<feature type="topological domain" description="Extracellular" evidence="1">
    <location>
        <begin position="52"/>
        <end position="56"/>
    </location>
</feature>
<gene>
    <name evidence="1" type="primary">secG</name>
    <name type="ordered locus">TON_1946</name>
</gene>
<organism>
    <name type="scientific">Thermococcus onnurineus (strain NA1)</name>
    <dbReference type="NCBI Taxonomy" id="523850"/>
    <lineage>
        <taxon>Archaea</taxon>
        <taxon>Methanobacteriati</taxon>
        <taxon>Methanobacteriota</taxon>
        <taxon>Thermococci</taxon>
        <taxon>Thermococcales</taxon>
        <taxon>Thermococcaceae</taxon>
        <taxon>Thermococcus</taxon>
    </lineage>
</organism>
<comment type="function">
    <text evidence="1">Involved in protein export. The function of the beta subunit is unknown, but it may be involved in stabilization of the trimeric complex.</text>
</comment>
<comment type="subunit">
    <text evidence="1">Component of the protein translocase complex. Heterotrimer consisting of alpha (SecY), beta (SecG) and gamma (SecE) subunits. Can form oligomers of the heterotrimer.</text>
</comment>
<comment type="subcellular location">
    <subcellularLocation>
        <location evidence="1">Cell membrane</location>
        <topology evidence="1">Single-pass membrane protein</topology>
    </subcellularLocation>
</comment>
<comment type="similarity">
    <text evidence="1">Belongs to the SEC61-beta family.</text>
</comment>
<dbReference type="EMBL" id="CP000855">
    <property type="protein sequence ID" value="ACJ17437.1"/>
    <property type="molecule type" value="Genomic_DNA"/>
</dbReference>
<dbReference type="RefSeq" id="WP_012572908.1">
    <property type="nucleotide sequence ID" value="NC_011529.1"/>
</dbReference>
<dbReference type="SMR" id="B6YW71"/>
<dbReference type="STRING" id="523850.TON_1946"/>
<dbReference type="GeneID" id="7017620"/>
<dbReference type="KEGG" id="ton:TON_1946"/>
<dbReference type="PATRIC" id="fig|523850.10.peg.1961"/>
<dbReference type="eggNOG" id="arCOG02957">
    <property type="taxonomic scope" value="Archaea"/>
</dbReference>
<dbReference type="HOGENOM" id="CLU_208205_3_1_2"/>
<dbReference type="OrthoDB" id="43651at2157"/>
<dbReference type="Proteomes" id="UP000002727">
    <property type="component" value="Chromosome"/>
</dbReference>
<dbReference type="GO" id="GO:0005886">
    <property type="term" value="C:plasma membrane"/>
    <property type="evidence" value="ECO:0007669"/>
    <property type="project" value="UniProtKB-SubCell"/>
</dbReference>
<dbReference type="GO" id="GO:0015031">
    <property type="term" value="P:protein transport"/>
    <property type="evidence" value="ECO:0007669"/>
    <property type="project" value="UniProtKB-UniRule"/>
</dbReference>
<dbReference type="HAMAP" id="MF_00751">
    <property type="entry name" value="SecG"/>
    <property type="match status" value="1"/>
</dbReference>
<dbReference type="InterPro" id="IPR023531">
    <property type="entry name" value="Preprot_translocase_SecG"/>
</dbReference>
<dbReference type="InterPro" id="IPR016482">
    <property type="entry name" value="SecG/Sec61-beta/Sbh"/>
</dbReference>
<dbReference type="NCBIfam" id="NF002318">
    <property type="entry name" value="PRK01253.1"/>
    <property type="match status" value="1"/>
</dbReference>
<dbReference type="Pfam" id="PF03911">
    <property type="entry name" value="Sec61_beta"/>
    <property type="match status" value="1"/>
</dbReference>
<name>SECG_THEON</name>
<reference key="1">
    <citation type="journal article" date="2008" name="J. Bacteriol.">
        <title>The complete genome sequence of Thermococcus onnurineus NA1 reveals a mixed heterotrophic and carboxydotrophic metabolism.</title>
        <authorList>
            <person name="Lee H.S."/>
            <person name="Kang S.G."/>
            <person name="Bae S.S."/>
            <person name="Lim J.K."/>
            <person name="Cho Y."/>
            <person name="Kim Y.J."/>
            <person name="Jeon J.H."/>
            <person name="Cha S.-S."/>
            <person name="Kwon K.K."/>
            <person name="Kim H.-T."/>
            <person name="Park C.-J."/>
            <person name="Lee H.-W."/>
            <person name="Kim S.I."/>
            <person name="Chun J."/>
            <person name="Colwell R.R."/>
            <person name="Kim S.-J."/>
            <person name="Lee J.-H."/>
        </authorList>
    </citation>
    <scope>NUCLEOTIDE SEQUENCE [LARGE SCALE GENOMIC DNA]</scope>
    <source>
        <strain>NA1</strain>
    </source>
</reference>